<sequence>MNKIVLYLLVYGATLGAAYDLLKAPSYFEEFLHKFNKNYSSESEKLRRFKIFQHNLEEIINKNQNDTSAQYEINKFSDLSKDETISKYTGLSLPLQKQNFCEVVVLDRPPDKGPLEFDWRRLNKVTSVKNQGMCGACWAFATLGSLESQFAIKHDQLINLSEQQLIDCDFVDVGCDGGLLHTAYEAVMNMGGIQAENDYPYEANNGPCRVNAAKFVVRVKKCYRYVTLFEEKLKDLLRIVGPIPVAIDASDIVGYKRGIIRYCENHGLNHAVLLVGYGVENGIPFWILKNTWGADWGEQGYFRVQQNINACGIKNELPSSAEIY</sequence>
<name>CATV_NPVAP</name>
<organism>
    <name type="scientific">Antheraea pernyi nuclear polyhedrosis virus</name>
    <name type="common">ApNPV</name>
    <dbReference type="NCBI Taxonomy" id="161494"/>
    <lineage>
        <taxon>Viruses</taxon>
        <taxon>Viruses incertae sedis</taxon>
        <taxon>Naldaviricetes</taxon>
        <taxon>Lefavirales</taxon>
        <taxon>Baculoviridae</taxon>
        <taxon>Alphabaculovirus</taxon>
        <taxon>Alphabaculovirus anpernyi</taxon>
    </lineage>
</organism>
<protein>
    <recommendedName>
        <fullName>Viral cathepsin</fullName>
        <shortName>V-cath</shortName>
        <ecNumber>3.4.22.50</ecNumber>
    </recommendedName>
    <alternativeName>
        <fullName>Cysteine proteinase</fullName>
        <shortName>CP</shortName>
    </alternativeName>
</protein>
<proteinExistence type="inferred from homology"/>
<gene>
    <name type="primary">VCATH</name>
</gene>
<reference key="1">
    <citation type="journal article" date="2002" name="J. Biosci. Bioeng.">
        <title>Genome mapping and gene analysis of Antheraea pernyi nucleopolyhedrovirus for improvement of baculovirus expression vector system.</title>
        <authorList>
            <person name="Huang Y.J."/>
            <person name="Kobayashi J."/>
            <person name="Yoshimura T."/>
        </authorList>
    </citation>
    <scope>NUCLEOTIDE SEQUENCE [GENOMIC DNA]</scope>
    <source>
        <strain>A</strain>
    </source>
</reference>
<dbReference type="EC" id="3.4.22.50"/>
<dbReference type="EMBL" id="AB072731">
    <property type="protein sequence ID" value="BAB69773.1"/>
    <property type="molecule type" value="Genomic_DNA"/>
</dbReference>
<dbReference type="RefSeq" id="YP_611001.1">
    <property type="nucleotide sequence ID" value="NC_008035.3"/>
</dbReference>
<dbReference type="SMR" id="Q91CL9"/>
<dbReference type="MEROPS" id="C01.083"/>
<dbReference type="GlyCosmos" id="Q91CL9">
    <property type="glycosylation" value="1 site, No reported glycans"/>
</dbReference>
<dbReference type="KEGG" id="vg:5141489"/>
<dbReference type="OrthoDB" id="4752at10239"/>
<dbReference type="GO" id="GO:0008234">
    <property type="term" value="F:cysteine-type peptidase activity"/>
    <property type="evidence" value="ECO:0007669"/>
    <property type="project" value="UniProtKB-KW"/>
</dbReference>
<dbReference type="GO" id="GO:0006508">
    <property type="term" value="P:proteolysis"/>
    <property type="evidence" value="ECO:0007669"/>
    <property type="project" value="UniProtKB-KW"/>
</dbReference>
<dbReference type="CDD" id="cd02248">
    <property type="entry name" value="Peptidase_C1A"/>
    <property type="match status" value="1"/>
</dbReference>
<dbReference type="FunFam" id="3.90.70.10:FF:000103">
    <property type="entry name" value="Hypothetical LOC496748"/>
    <property type="match status" value="1"/>
</dbReference>
<dbReference type="Gene3D" id="3.90.70.10">
    <property type="entry name" value="Cysteine proteinases"/>
    <property type="match status" value="1"/>
</dbReference>
<dbReference type="InterPro" id="IPR038765">
    <property type="entry name" value="Papain-like_cys_pep_sf"/>
</dbReference>
<dbReference type="InterPro" id="IPR025661">
    <property type="entry name" value="Pept_asp_AS"/>
</dbReference>
<dbReference type="InterPro" id="IPR000169">
    <property type="entry name" value="Pept_cys_AS"/>
</dbReference>
<dbReference type="InterPro" id="IPR025660">
    <property type="entry name" value="Pept_his_AS"/>
</dbReference>
<dbReference type="InterPro" id="IPR013128">
    <property type="entry name" value="Peptidase_C1A"/>
</dbReference>
<dbReference type="InterPro" id="IPR000668">
    <property type="entry name" value="Peptidase_C1A_C"/>
</dbReference>
<dbReference type="InterPro" id="IPR039417">
    <property type="entry name" value="Peptidase_C1A_papain-like"/>
</dbReference>
<dbReference type="InterPro" id="IPR013201">
    <property type="entry name" value="Prot_inhib_I29"/>
</dbReference>
<dbReference type="PANTHER" id="PTHR12411">
    <property type="entry name" value="CYSTEINE PROTEASE FAMILY C1-RELATED"/>
    <property type="match status" value="1"/>
</dbReference>
<dbReference type="Pfam" id="PF08246">
    <property type="entry name" value="Inhibitor_I29"/>
    <property type="match status" value="1"/>
</dbReference>
<dbReference type="Pfam" id="PF00112">
    <property type="entry name" value="Peptidase_C1"/>
    <property type="match status" value="1"/>
</dbReference>
<dbReference type="PRINTS" id="PR00705">
    <property type="entry name" value="PAPAIN"/>
</dbReference>
<dbReference type="SMART" id="SM00848">
    <property type="entry name" value="Inhibitor_I29"/>
    <property type="match status" value="1"/>
</dbReference>
<dbReference type="SMART" id="SM00645">
    <property type="entry name" value="Pept_C1"/>
    <property type="match status" value="1"/>
</dbReference>
<dbReference type="SUPFAM" id="SSF54001">
    <property type="entry name" value="Cysteine proteinases"/>
    <property type="match status" value="1"/>
</dbReference>
<dbReference type="PROSITE" id="PS00640">
    <property type="entry name" value="THIOL_PROTEASE_ASN"/>
    <property type="match status" value="1"/>
</dbReference>
<dbReference type="PROSITE" id="PS00139">
    <property type="entry name" value="THIOL_PROTEASE_CYS"/>
    <property type="match status" value="1"/>
</dbReference>
<dbReference type="PROSITE" id="PS00639">
    <property type="entry name" value="THIOL_PROTEASE_HIS"/>
    <property type="match status" value="1"/>
</dbReference>
<evidence type="ECO:0000250" key="1"/>
<evidence type="ECO:0000255" key="2"/>
<evidence type="ECO:0000255" key="3">
    <source>
        <dbReference type="PROSITE-ProRule" id="PRU10088"/>
    </source>
</evidence>
<evidence type="ECO:0000255" key="4">
    <source>
        <dbReference type="PROSITE-ProRule" id="PRU10089"/>
    </source>
</evidence>
<evidence type="ECO:0000255" key="5">
    <source>
        <dbReference type="PROSITE-ProRule" id="PRU10090"/>
    </source>
</evidence>
<organismHost>
    <name type="scientific">Antheraea pernyi</name>
    <name type="common">Chinese oak silk moth</name>
    <name type="synonym">Bombyx pernyi</name>
    <dbReference type="NCBI Taxonomy" id="7119"/>
</organismHost>
<comment type="function">
    <text evidence="1">Cysteine protease that plays an essential role in host liquefaction to facilitate horizontal transmission of the virus. May participate in the degradation of foreign protein expressed by the baculovirus system (By similarity).</text>
</comment>
<comment type="catalytic activity">
    <reaction>
        <text>Endopeptidase of broad specificity, hydrolyzing substrates of both cathepsin L and cathepsin B.</text>
        <dbReference type="EC" id="3.4.22.50"/>
    </reaction>
</comment>
<comment type="PTM">
    <text evidence="1">Synthesized as an inactive proenzyme and activated by proteolytic removal of the inhibitory propeptide.</text>
</comment>
<comment type="similarity">
    <text evidence="3 4 5">Belongs to the peptidase C1 family.</text>
</comment>
<feature type="signal peptide" evidence="2">
    <location>
        <begin position="1"/>
        <end position="16"/>
    </location>
</feature>
<feature type="propeptide" id="PRO_0000322203" description="Activation peptide" evidence="2">
    <location>
        <begin position="17"/>
        <end position="113"/>
    </location>
</feature>
<feature type="chain" id="PRO_0000050574" description="Viral cathepsin">
    <location>
        <begin position="114"/>
        <end position="324"/>
    </location>
</feature>
<feature type="active site" evidence="1">
    <location>
        <position position="137"/>
    </location>
</feature>
<feature type="active site" evidence="1">
    <location>
        <position position="270"/>
    </location>
</feature>
<feature type="active site" evidence="1">
    <location>
        <position position="290"/>
    </location>
</feature>
<feature type="glycosylation site" description="N-linked (GlcNAc...) asparagine; by host" evidence="2">
    <location>
        <position position="159"/>
    </location>
</feature>
<feature type="disulfide bond" evidence="1">
    <location>
        <begin position="134"/>
        <end position="175"/>
    </location>
</feature>
<feature type="disulfide bond" evidence="1">
    <location>
        <begin position="168"/>
        <end position="208"/>
    </location>
</feature>
<feature type="disulfide bond" evidence="1">
    <location>
        <begin position="263"/>
        <end position="311"/>
    </location>
</feature>
<accession>Q91CL9</accession>
<keyword id="KW-1015">Disulfide bond</keyword>
<keyword id="KW-0325">Glycoprotein</keyword>
<keyword id="KW-0378">Hydrolase</keyword>
<keyword id="KW-0645">Protease</keyword>
<keyword id="KW-0732">Signal</keyword>
<keyword id="KW-0788">Thiol protease</keyword>
<keyword id="KW-0865">Zymogen</keyword>